<organism>
    <name type="scientific">Papio hamadryas</name>
    <name type="common">Hamadryas baboon</name>
    <dbReference type="NCBI Taxonomy" id="9557"/>
    <lineage>
        <taxon>Eukaryota</taxon>
        <taxon>Metazoa</taxon>
        <taxon>Chordata</taxon>
        <taxon>Craniata</taxon>
        <taxon>Vertebrata</taxon>
        <taxon>Euteleostomi</taxon>
        <taxon>Mammalia</taxon>
        <taxon>Eutheria</taxon>
        <taxon>Euarchontoglires</taxon>
        <taxon>Primates</taxon>
        <taxon>Haplorrhini</taxon>
        <taxon>Catarrhini</taxon>
        <taxon>Cercopithecidae</taxon>
        <taxon>Cercopithecinae</taxon>
        <taxon>Papio</taxon>
    </lineage>
</organism>
<accession>Q8MJ06</accession>
<sequence length="2152" mass="241002">MSDTPSTGFSIIHPTSSEDQVPPPRHLSLTHPVVAKRISFYKSGDPQFGGVRVVVNPRSFKSFDALLDNLSRKVPLPFGVRNISTPRGRHSITRLEELEDGESYLCSHGRKVQPVDLDKARRRPRPWLSSRAISAQAPPHPVAVAAPGKPRAPRSLVVFRNGDPKTRRTVLLSRRVTQSFEAFLQHLTEVMQRPVVKLYATDGRRVPSLQAVILSSGAVVAAGREPFKPGNYDIQKYLLPARLPGISQRVYPKGNAKSESRKISTHMSSSSRSQIYSVSSEKTHNNDCYLDYSFVPENYLALEKSDSQNLPIYPSEDDIEKSIIFNQDGTMTVEMKVRFRIKEEETIKWTTTVSKTGPSNNDEKSEMSFPGRTESRSSGLKLAACSFSADVSPMERSSDQEGSLPEEINIQTTDEEAETCSSASWENATVDTDITQGTQDQAKHRFYRPPTPGLRRVRQKKSVIGSVTLVSETEVQEKMIGQFSYSEERESGENKSEYHMFAHSCSKMSAVSNKPVLVQINNNDQMEESLLERKKENRLLKSSAISAGVIEITSQKMLEMSHNNGLPSTISNNSIVEEGVVDSMVSDNKTGIKNFRAYDNTNDRFSPISADATHFSSTNSGTDKNISEATASETSSTVTARIDRLINEFAQCGLTKLPKNEKKILSSVASKKKKKSLQQAINSRYQDGQLATKGILNKNERINTRGRIRKEMILQDSDSRLKGGILCEEDLQTSDTVIESNTFCSKSNLNSMISKNFHRNKLNTTQNSKVQGLLTKRKSKSLKKVSLGAPKKREICQGDKVFPHNESKYCKSTFENKSLFHVFNILEQKPKYFYAPQSQAEVASGYLRGMAKKSLVTDSHITLRSQKKQKGDKLKASAVVSKQHATTRANSLASLKKPDFPEDIAHHSVQNYIQSWLQNINPYPTLKPIKSAPVCRNEMSVVNCNNNSFPGNDPHKSSGKINNFVMESNKHITKIASLTGDNLCKEGDKSFIASDTGEEDLHETQVGSLNDAYLVSLHEHCTLSQSAINDRNTKRHIAAEKSGPEKKLVYQEINLARKRQSVEAAIQVDPIEEETPKDLLPVLMLHQLQASVPGISKTQNGVVQMPGSLANVPFHSAICNSSTNLLLAWLLVLNLKGSMNSFCQVDAHKTINKSSETLALLEILKHIAITEEADDLKAAVANLVESTTSHFGLSEKEQDVVPLDLSANCSTVSIQSVPKCSENERTQRISSLDGDCSASEACAPEVCVLEVTCSPCETWTVNKTYPPKETCNPSDTHFPSDGYGVDQTSMNKACFLGEVCSLTDTVFSNKACAQKENHIYEGACPTVETYVPVSVCNTIDFFNSKENTYTDNLESTEELERGDDIQKDLNILTDPEYKNGFNTLVSHQNVSNLSSCRLCLSEKEAELDKKHSSLDDFKNCSLKKFQDENAYTSFDMEEPRTSEEPGSITNSMTSSERNISELESFEELENPDTDIFNTVVNGGEQATEELIQEELEASKTLELIDISGKNVMEEKRRNGIIYEIISKRLATPPSLVFCYDSKQNREKETNEGETKMVKMMVKSMEAGSYSESSPDLKKCIKSPVTSDWSDYRPDSDSEQPYKTSSDDPNDSGELAQEKEYNIGFVKRAIEKLYGKADIIKPSFFPGSTRKSQVCPYNSVEFQCSRKASLYDSEGQSFGSSEQVSTSSPMLQEFQEERQDKCDVNGVRNDYYGGDIVEPGTKQNDHSRILTDIEEGVLIDKGKWLLKENHLLRMSSENPGMCGNADTTSVDTLLDNNSSEVPYSHFGNLAPVPVMDELSSSELEELTQPLELKCNYFNMPHGSDSEPFHEDVHNETCAKERIANHHTEERGNNHQSERVCTSVTHSFTSASNKVYPVSDDAIKNQPLPGSNMIHGTLQEADSLDKLYALCGQHCPILTVIIQPVNEEDRGFAYRKESDIENFLGFYLWMKIHPYLLQTDKKVFREENNKASMRQNHIDNAIGDIFDQFYFNNTFDLMGKRRKQKRINFLELEEEGNLKKFQPDLKERLCMNFLHTSLLVVSNMNSDTQDLSSQTNEMFKAVDENNNLLNTGFQGSRTNLNQIVRENTNCHYFFEMLGQACLLDICQVETSLNISNRNTLEELCMFEGENLFIWEEEDILNLTDLESSREQEDL</sequence>
<reference key="1">
    <citation type="submission" date="2001-05" db="EMBL/GenBank/DDBJ databases">
        <title>Comparative sequencing of RP1: a closer look at a highly divergent retina-specific protein.</title>
        <authorList>
            <person name="Malone K.A."/>
        </authorList>
    </citation>
    <scope>NUCLEOTIDE SEQUENCE [MRNA]</scope>
</reference>
<comment type="function">
    <text evidence="1">Microtubule-associated protein regulating the stability and length of the microtubule-based axoneme of photoreceptors. Required for the differentiation of photoreceptor cells, it plays a role in the organization of the outer segment of rod and cone photoreceptors ensuring the correct orientation and higher-order stacking of outer segment disks along the photoreceptor axoneme (By similarity).</text>
</comment>
<comment type="subunit">
    <text evidence="1">Interacts (via the doublecortin domains) with microtubules. Interacts with RP1L1 (By similarity). Interacts with MAK (By similarity).</text>
</comment>
<comment type="subcellular location">
    <subcellularLocation>
        <location evidence="1">Cytoplasm</location>
        <location evidence="1">Cytoskeleton</location>
        <location evidence="1">Cilium axoneme</location>
    </subcellularLocation>
    <subcellularLocation>
        <location evidence="1">Cell projection</location>
        <location evidence="1">Cilium</location>
        <location evidence="1">Photoreceptor outer segment</location>
    </subcellularLocation>
    <text evidence="1">Specifically localized in the connecting cilia of rod and cone photoreceptors.</text>
</comment>
<comment type="domain">
    <text evidence="1">The doublecortin domains, which mediate interaction with microtubules, are required for regulation of microtubule polymerization and function in photoreceptor differentiation.</text>
</comment>
<keyword id="KW-0966">Cell projection</keyword>
<keyword id="KW-0969">Cilium</keyword>
<keyword id="KW-0970">Cilium biogenesis/degradation</keyword>
<keyword id="KW-0963">Cytoplasm</keyword>
<keyword id="KW-0206">Cytoskeleton</keyword>
<keyword id="KW-0677">Repeat</keyword>
<keyword id="KW-0716">Sensory transduction</keyword>
<keyword id="KW-0844">Vision</keyword>
<dbReference type="EMBL" id="AY034784">
    <property type="protein sequence ID" value="AAK58441.1"/>
    <property type="molecule type" value="mRNA"/>
</dbReference>
<dbReference type="SMR" id="Q8MJ06"/>
<dbReference type="GO" id="GO:0005930">
    <property type="term" value="C:axoneme"/>
    <property type="evidence" value="ECO:0007669"/>
    <property type="project" value="TreeGrafter"/>
</dbReference>
<dbReference type="GO" id="GO:0005875">
    <property type="term" value="C:microtubule associated complex"/>
    <property type="evidence" value="ECO:0000250"/>
    <property type="project" value="UniProtKB"/>
</dbReference>
<dbReference type="GO" id="GO:0001917">
    <property type="term" value="C:photoreceptor inner segment"/>
    <property type="evidence" value="ECO:0000250"/>
    <property type="project" value="UniProtKB"/>
</dbReference>
<dbReference type="GO" id="GO:0001750">
    <property type="term" value="C:photoreceptor outer segment"/>
    <property type="evidence" value="ECO:0000250"/>
    <property type="project" value="UniProtKB"/>
</dbReference>
<dbReference type="GO" id="GO:0008017">
    <property type="term" value="F:microtubule binding"/>
    <property type="evidence" value="ECO:0000250"/>
    <property type="project" value="UniProtKB"/>
</dbReference>
<dbReference type="GO" id="GO:0035082">
    <property type="term" value="P:axoneme assembly"/>
    <property type="evidence" value="ECO:0000250"/>
    <property type="project" value="UniProtKB"/>
</dbReference>
<dbReference type="GO" id="GO:0035556">
    <property type="term" value="P:intracellular signal transduction"/>
    <property type="evidence" value="ECO:0007669"/>
    <property type="project" value="InterPro"/>
</dbReference>
<dbReference type="GO" id="GO:0042461">
    <property type="term" value="P:photoreceptor cell development"/>
    <property type="evidence" value="ECO:0000250"/>
    <property type="project" value="UniProtKB"/>
</dbReference>
<dbReference type="GO" id="GO:0045494">
    <property type="term" value="P:photoreceptor cell maintenance"/>
    <property type="evidence" value="ECO:0000250"/>
    <property type="project" value="UniProtKB"/>
</dbReference>
<dbReference type="GO" id="GO:0035845">
    <property type="term" value="P:photoreceptor cell outer segment organization"/>
    <property type="evidence" value="ECO:0000250"/>
    <property type="project" value="UniProtKB"/>
</dbReference>
<dbReference type="GO" id="GO:0046549">
    <property type="term" value="P:retinal cone cell development"/>
    <property type="evidence" value="ECO:0000250"/>
    <property type="project" value="UniProtKB"/>
</dbReference>
<dbReference type="GO" id="GO:0046548">
    <property type="term" value="P:retinal rod cell development"/>
    <property type="evidence" value="ECO:0000250"/>
    <property type="project" value="UniProtKB"/>
</dbReference>
<dbReference type="GO" id="GO:0007601">
    <property type="term" value="P:visual perception"/>
    <property type="evidence" value="ECO:0007669"/>
    <property type="project" value="UniProtKB-KW"/>
</dbReference>
<dbReference type="CDD" id="cd17145">
    <property type="entry name" value="DCX1_RP1"/>
    <property type="match status" value="1"/>
</dbReference>
<dbReference type="CDD" id="cd17147">
    <property type="entry name" value="DCX2_RP1"/>
    <property type="match status" value="1"/>
</dbReference>
<dbReference type="FunFam" id="3.10.20.230:FF:000006">
    <property type="entry name" value="Oxygen-regulated protein 1"/>
    <property type="match status" value="1"/>
</dbReference>
<dbReference type="FunFam" id="3.10.20.230:FF:000007">
    <property type="entry name" value="Oxygen-regulated protein 1"/>
    <property type="match status" value="1"/>
</dbReference>
<dbReference type="Gene3D" id="3.10.20.230">
    <property type="entry name" value="Doublecortin domain"/>
    <property type="match status" value="2"/>
</dbReference>
<dbReference type="InterPro" id="IPR003533">
    <property type="entry name" value="Doublecortin_dom"/>
</dbReference>
<dbReference type="InterPro" id="IPR036572">
    <property type="entry name" value="Doublecortin_dom_sf"/>
</dbReference>
<dbReference type="PANTHER" id="PTHR23005:SF4">
    <property type="entry name" value="OXYGEN-REGULATED PROTEIN 1"/>
    <property type="match status" value="1"/>
</dbReference>
<dbReference type="PANTHER" id="PTHR23005">
    <property type="entry name" value="RETINITIS PIGMENTOSA 1 PROTEIN"/>
    <property type="match status" value="1"/>
</dbReference>
<dbReference type="Pfam" id="PF03607">
    <property type="entry name" value="DCX"/>
    <property type="match status" value="2"/>
</dbReference>
<dbReference type="SMART" id="SM00537">
    <property type="entry name" value="DCX"/>
    <property type="match status" value="2"/>
</dbReference>
<dbReference type="SUPFAM" id="SSF89837">
    <property type="entry name" value="Doublecortin (DC)"/>
    <property type="match status" value="2"/>
</dbReference>
<dbReference type="PROSITE" id="PS50309">
    <property type="entry name" value="DC"/>
    <property type="match status" value="2"/>
</dbReference>
<proteinExistence type="evidence at transcript level"/>
<protein>
    <recommendedName>
        <fullName>Oxygen-regulated protein 1</fullName>
    </recommendedName>
    <alternativeName>
        <fullName>Retinitis pigmentosa RP1 protein homolog</fullName>
    </alternativeName>
</protein>
<feature type="chain" id="PRO_0000097412" description="Oxygen-regulated protein 1">
    <location>
        <begin position="1"/>
        <end position="2152"/>
    </location>
</feature>
<feature type="domain" description="Doublecortin 1" evidence="2">
    <location>
        <begin position="36"/>
        <end position="118"/>
    </location>
</feature>
<feature type="domain" description="Doublecortin 2" evidence="2">
    <location>
        <begin position="154"/>
        <end position="233"/>
    </location>
</feature>
<feature type="region of interest" description="Disordered" evidence="3">
    <location>
        <begin position="1"/>
        <end position="25"/>
    </location>
</feature>
<feature type="region of interest" description="Disordered" evidence="3">
    <location>
        <begin position="353"/>
        <end position="375"/>
    </location>
</feature>
<feature type="region of interest" description="Disordered" evidence="3">
    <location>
        <begin position="1435"/>
        <end position="1455"/>
    </location>
</feature>
<feature type="region of interest" description="Disordered" evidence="3">
    <location>
        <begin position="1587"/>
        <end position="1616"/>
    </location>
</feature>
<feature type="compositionally biased region" description="Polar residues" evidence="3">
    <location>
        <begin position="1"/>
        <end position="19"/>
    </location>
</feature>
<name>RP1_PAPHA</name>
<gene>
    <name type="primary">RP1</name>
</gene>
<evidence type="ECO:0000250" key="1"/>
<evidence type="ECO:0000255" key="2">
    <source>
        <dbReference type="PROSITE-ProRule" id="PRU00072"/>
    </source>
</evidence>
<evidence type="ECO:0000256" key="3">
    <source>
        <dbReference type="SAM" id="MobiDB-lite"/>
    </source>
</evidence>